<organism>
    <name type="scientific">Pseudomonas aeruginosa (strain ATCC 15692 / DSM 22644 / CIP 104116 / JCM 14847 / LMG 12228 / 1C / PRS 101 / PAO1)</name>
    <dbReference type="NCBI Taxonomy" id="208964"/>
    <lineage>
        <taxon>Bacteria</taxon>
        <taxon>Pseudomonadati</taxon>
        <taxon>Pseudomonadota</taxon>
        <taxon>Gammaproteobacteria</taxon>
        <taxon>Pseudomonadales</taxon>
        <taxon>Pseudomonadaceae</taxon>
        <taxon>Pseudomonas</taxon>
    </lineage>
</organism>
<dbReference type="EMBL" id="AE004091">
    <property type="protein sequence ID" value="AAG07687.1"/>
    <property type="molecule type" value="Genomic_DNA"/>
</dbReference>
<dbReference type="PIR" id="B83108">
    <property type="entry name" value="B83108"/>
</dbReference>
<dbReference type="PDB" id="8ODN">
    <property type="method" value="EM"/>
    <property type="resolution" value="2.70 A"/>
    <property type="chains" value="B/D/F/H/J/L/N/P/R/T/W/Y/a=1-245"/>
</dbReference>
<dbReference type="PDBsum" id="8ODN"/>
<dbReference type="EMDB" id="EMD-16810"/>
<dbReference type="EMDB" id="EMD-16818"/>
<dbReference type="SMR" id="Q9HWA1"/>
<dbReference type="STRING" id="208964.PA4299"/>
<dbReference type="PaxDb" id="208964-PA4299"/>
<dbReference type="DNASU" id="881552"/>
<dbReference type="KEGG" id="pae:PA4299"/>
<dbReference type="PATRIC" id="fig|208964.12.peg.4501"/>
<dbReference type="PseudoCAP" id="PA4299"/>
<dbReference type="HOGENOM" id="CLU_069566_2_0_6"/>
<dbReference type="InParanoid" id="Q9HWA1"/>
<dbReference type="OrthoDB" id="6181789at2"/>
<dbReference type="BioCyc" id="PAER208964:G1FZ6-4383-MONOMER"/>
<dbReference type="Proteomes" id="UP000002438">
    <property type="component" value="Chromosome"/>
</dbReference>
<dbReference type="GO" id="GO:0005886">
    <property type="term" value="C:plasma membrane"/>
    <property type="evidence" value="ECO:0007669"/>
    <property type="project" value="UniProtKB-SubCell"/>
</dbReference>
<dbReference type="Gene3D" id="1.25.40.10">
    <property type="entry name" value="Tetratricopeptide repeat domain"/>
    <property type="match status" value="1"/>
</dbReference>
<dbReference type="InterPro" id="IPR011990">
    <property type="entry name" value="TPR-like_helical_dom_sf"/>
</dbReference>
<dbReference type="InterPro" id="IPR019734">
    <property type="entry name" value="TPR_rpt"/>
</dbReference>
<dbReference type="InterPro" id="IPR016931">
    <property type="entry name" value="UCP029658_TPR"/>
</dbReference>
<dbReference type="PIRSF" id="PIRSF029658">
    <property type="entry name" value="UCP029658_TPR"/>
    <property type="match status" value="1"/>
</dbReference>
<dbReference type="SUPFAM" id="SSF48452">
    <property type="entry name" value="TPR-like"/>
    <property type="match status" value="1"/>
</dbReference>
<dbReference type="PROSITE" id="PS51257">
    <property type="entry name" value="PROKAR_LIPOPROTEIN"/>
    <property type="match status" value="1"/>
</dbReference>
<dbReference type="PROSITE" id="PS50005">
    <property type="entry name" value="TPR"/>
    <property type="match status" value="1"/>
</dbReference>
<dbReference type="PROSITE" id="PS50293">
    <property type="entry name" value="TPR_REGION"/>
    <property type="match status" value="1"/>
</dbReference>
<reference key="1">
    <citation type="journal article" date="2000" name="Nature">
        <title>Complete genome sequence of Pseudomonas aeruginosa PAO1, an opportunistic pathogen.</title>
        <authorList>
            <person name="Stover C.K."/>
            <person name="Pham X.-Q.T."/>
            <person name="Erwin A.L."/>
            <person name="Mizoguchi S.D."/>
            <person name="Warrener P."/>
            <person name="Hickey M.J."/>
            <person name="Brinkman F.S.L."/>
            <person name="Hufnagle W.O."/>
            <person name="Kowalik D.J."/>
            <person name="Lagrou M."/>
            <person name="Garber R.L."/>
            <person name="Goltry L."/>
            <person name="Tolentino E."/>
            <person name="Westbrock-Wadman S."/>
            <person name="Yuan Y."/>
            <person name="Brody L.L."/>
            <person name="Coulter S.N."/>
            <person name="Folger K.R."/>
            <person name="Kas A."/>
            <person name="Larbig K."/>
            <person name="Lim R.M."/>
            <person name="Smith K.A."/>
            <person name="Spencer D.H."/>
            <person name="Wong G.K.-S."/>
            <person name="Wu Z."/>
            <person name="Paulsen I.T."/>
            <person name="Reizer J."/>
            <person name="Saier M.H. Jr."/>
            <person name="Hancock R.E.W."/>
            <person name="Lory S."/>
            <person name="Olson M.V."/>
        </authorList>
    </citation>
    <scope>NUCLEOTIDE SEQUENCE [LARGE SCALE GENOMIC DNA]</scope>
    <source>
        <strain>ATCC 15692 / DSM 22644 / CIP 104116 / JCM 14847 / LMG 12228 / 1C / PRS 101 / PAO1</strain>
    </source>
</reference>
<sequence>MKALIGIGLCAALLGGCAALPGRDGPRECSQQLGQEQELQMNMVRDMIREGRLHAALANLESMPPGLLDVREERALILRRIGDPRARAEYQALLETCKAPEAHHGLGLLALRNGDSARAVLELREAARLRPTESRFRNDLGVALLKRGDRVGARFEFITALELQQGGKLPATNLLGLLYLQGDREDAQRLIERLQLDARDIRAAEARARSWGAVPTPGAAPASDDPLAELPAEANMHTAMANEAP</sequence>
<gene>
    <name type="ordered locus">PA4299</name>
</gene>
<name>Y4299_PSEAE</name>
<feature type="signal peptide" evidence="1">
    <location>
        <begin position="1"/>
        <end position="16"/>
    </location>
</feature>
<feature type="chain" id="PRO_0000287779" description="TPR repeat-containing protein PA4299">
    <location>
        <begin position="17"/>
        <end position="245"/>
    </location>
</feature>
<feature type="repeat" description="TPR 1">
    <location>
        <begin position="100"/>
        <end position="133"/>
    </location>
</feature>
<feature type="repeat" description="TPR 2">
    <location>
        <begin position="135"/>
        <end position="167"/>
    </location>
</feature>
<feature type="repeat" description="TPR 3">
    <location>
        <begin position="169"/>
        <end position="200"/>
    </location>
</feature>
<feature type="region of interest" description="Disordered" evidence="2">
    <location>
        <begin position="210"/>
        <end position="245"/>
    </location>
</feature>
<feature type="lipid moiety-binding region" description="N-palmitoyl cysteine" evidence="1">
    <location>
        <position position="17"/>
    </location>
</feature>
<feature type="lipid moiety-binding region" description="S-diacylglycerol cysteine" evidence="1">
    <location>
        <position position="17"/>
    </location>
</feature>
<keyword id="KW-0002">3D-structure</keyword>
<keyword id="KW-1003">Cell membrane</keyword>
<keyword id="KW-0449">Lipoprotein</keyword>
<keyword id="KW-0472">Membrane</keyword>
<keyword id="KW-0564">Palmitate</keyword>
<keyword id="KW-1185">Reference proteome</keyword>
<keyword id="KW-0677">Repeat</keyword>
<keyword id="KW-0732">Signal</keyword>
<keyword id="KW-0802">TPR repeat</keyword>
<evidence type="ECO:0000255" key="1">
    <source>
        <dbReference type="PROSITE-ProRule" id="PRU00303"/>
    </source>
</evidence>
<evidence type="ECO:0000256" key="2">
    <source>
        <dbReference type="SAM" id="MobiDB-lite"/>
    </source>
</evidence>
<proteinExistence type="evidence at protein level"/>
<comment type="subcellular location">
    <subcellularLocation>
        <location evidence="1">Cell membrane</location>
        <topology evidence="1">Lipid-anchor</topology>
    </subcellularLocation>
</comment>
<protein>
    <recommendedName>
        <fullName>TPR repeat-containing protein PA4299</fullName>
    </recommendedName>
</protein>
<accession>Q9HWA1</accession>